<reference key="1">
    <citation type="journal article" date="2006" name="PLoS Genet.">
        <title>The complete genome sequence and comparative genome analysis of the high pathogenicity Yersinia enterocolitica strain 8081.</title>
        <authorList>
            <person name="Thomson N.R."/>
            <person name="Howard S."/>
            <person name="Wren B.W."/>
            <person name="Holden M.T.G."/>
            <person name="Crossman L."/>
            <person name="Challis G.L."/>
            <person name="Churcher C."/>
            <person name="Mungall K."/>
            <person name="Brooks K."/>
            <person name="Chillingworth T."/>
            <person name="Feltwell T."/>
            <person name="Abdellah Z."/>
            <person name="Hauser H."/>
            <person name="Jagels K."/>
            <person name="Maddison M."/>
            <person name="Moule S."/>
            <person name="Sanders M."/>
            <person name="Whitehead S."/>
            <person name="Quail M.A."/>
            <person name="Dougan G."/>
            <person name="Parkhill J."/>
            <person name="Prentice M.B."/>
        </authorList>
    </citation>
    <scope>NUCLEOTIDE SEQUENCE [LARGE SCALE GENOMIC DNA]</scope>
    <source>
        <strain>NCTC 13174 / 8081</strain>
    </source>
</reference>
<keyword id="KW-0963">Cytoplasm</keyword>
<keyword id="KW-0369">Histidine metabolism</keyword>
<keyword id="KW-0456">Lyase</keyword>
<evidence type="ECO:0000255" key="1">
    <source>
        <dbReference type="HAMAP-Rule" id="MF_00229"/>
    </source>
</evidence>
<protein>
    <recommendedName>
        <fullName evidence="1">Histidine ammonia-lyase</fullName>
        <shortName evidence="1">Histidase</shortName>
        <ecNumber evidence="1">4.3.1.3</ecNumber>
    </recommendedName>
</protein>
<comment type="catalytic activity">
    <reaction evidence="1">
        <text>L-histidine = trans-urocanate + NH4(+)</text>
        <dbReference type="Rhea" id="RHEA:21232"/>
        <dbReference type="ChEBI" id="CHEBI:17771"/>
        <dbReference type="ChEBI" id="CHEBI:28938"/>
        <dbReference type="ChEBI" id="CHEBI:57595"/>
        <dbReference type="EC" id="4.3.1.3"/>
    </reaction>
</comment>
<comment type="pathway">
    <text evidence="1">Amino-acid degradation; L-histidine degradation into L-glutamate; N-formimidoyl-L-glutamate from L-histidine: step 1/3.</text>
</comment>
<comment type="subcellular location">
    <subcellularLocation>
        <location evidence="1">Cytoplasm</location>
    </subcellularLocation>
</comment>
<comment type="PTM">
    <text evidence="1">Contains an active site 4-methylidene-imidazol-5-one (MIO), which is formed autocatalytically by cyclization and dehydration of residues Ala-Ser-Gly.</text>
</comment>
<comment type="similarity">
    <text evidence="1">Belongs to the PAL/histidase family.</text>
</comment>
<sequence length="507" mass="54655">MTLRPGQMTLADLRHIYQHPVKITLDESAYAPIQQSVDCVQKILAEKRTAYGINTGFGLLASTRIATEDLENLQRSIVLSHAAGVGEPNDDAIVRLIMVLKINSLARGFSGIRLEVIQALITLVNAQVYPHIPLKGSVGASGDLAPLAHMSLLLLGEGKARYQGEWLDARAALAKAGLQPLTLAAKEGLALLNGTQVSTAYALRGLFEAEDLYAAASVFGSLTVEAALGSRSPFDARIHAVRGQRGQIDAARTYRHLLGERSEVSESHRNCDKVQDPYSLRCQPQVMGACLTQMRQAAEVLAIESNAVSDNPLVFADQGDVLSGGNFHAEPVAMAADNLALALAEIGSLAERRISLLMDKHMSQLPPFLVENGGVNSGFMIAQVTAAALTSENKGLAFPSSVDSIPTSANQEDHVSMAPRAGKRLWEMAENVRGILAVEWLAACQGLDLRKGLKTSDALEPARLLLRKHVAYYEKDRFFAPDIEAASQLIALRHMNELMPAHLLPSL</sequence>
<proteinExistence type="inferred from homology"/>
<gene>
    <name evidence="1" type="primary">hutH</name>
    <name type="ordered locus">YE4094</name>
</gene>
<name>HUTH_YERE8</name>
<accession>A1JSW6</accession>
<feature type="chain" id="PRO_0000336591" description="Histidine ammonia-lyase">
    <location>
        <begin position="1"/>
        <end position="507"/>
    </location>
</feature>
<feature type="modified residue" description="2,3-didehydroalanine (Ser)" evidence="1">
    <location>
        <position position="141"/>
    </location>
</feature>
<feature type="cross-link" description="5-imidazolinone (Ala-Gly)" evidence="1">
    <location>
        <begin position="140"/>
        <end position="142"/>
    </location>
</feature>
<dbReference type="EC" id="4.3.1.3" evidence="1"/>
<dbReference type="EMBL" id="AM286415">
    <property type="protein sequence ID" value="CAL14111.1"/>
    <property type="molecule type" value="Genomic_DNA"/>
</dbReference>
<dbReference type="RefSeq" id="YP_001008235.1">
    <property type="nucleotide sequence ID" value="NC_008800.1"/>
</dbReference>
<dbReference type="SMR" id="A1JSW6"/>
<dbReference type="KEGG" id="yen:YE4094"/>
<dbReference type="PATRIC" id="fig|393305.7.peg.4357"/>
<dbReference type="eggNOG" id="COG2986">
    <property type="taxonomic scope" value="Bacteria"/>
</dbReference>
<dbReference type="HOGENOM" id="CLU_014801_4_0_6"/>
<dbReference type="OrthoDB" id="9806955at2"/>
<dbReference type="UniPathway" id="UPA00379">
    <property type="reaction ID" value="UER00549"/>
</dbReference>
<dbReference type="Proteomes" id="UP000000642">
    <property type="component" value="Chromosome"/>
</dbReference>
<dbReference type="GO" id="GO:0005737">
    <property type="term" value="C:cytoplasm"/>
    <property type="evidence" value="ECO:0007669"/>
    <property type="project" value="UniProtKB-SubCell"/>
</dbReference>
<dbReference type="GO" id="GO:0004397">
    <property type="term" value="F:histidine ammonia-lyase activity"/>
    <property type="evidence" value="ECO:0007669"/>
    <property type="project" value="UniProtKB-UniRule"/>
</dbReference>
<dbReference type="GO" id="GO:0019556">
    <property type="term" value="P:L-histidine catabolic process to glutamate and formamide"/>
    <property type="evidence" value="ECO:0007669"/>
    <property type="project" value="UniProtKB-UniPathway"/>
</dbReference>
<dbReference type="GO" id="GO:0019557">
    <property type="term" value="P:L-histidine catabolic process to glutamate and formate"/>
    <property type="evidence" value="ECO:0007669"/>
    <property type="project" value="UniProtKB-UniPathway"/>
</dbReference>
<dbReference type="CDD" id="cd00332">
    <property type="entry name" value="PAL-HAL"/>
    <property type="match status" value="1"/>
</dbReference>
<dbReference type="FunFam" id="1.10.275.10:FF:000005">
    <property type="entry name" value="Histidine ammonia-lyase"/>
    <property type="match status" value="1"/>
</dbReference>
<dbReference type="FunFam" id="1.20.200.10:FF:000003">
    <property type="entry name" value="Histidine ammonia-lyase"/>
    <property type="match status" value="1"/>
</dbReference>
<dbReference type="Gene3D" id="1.20.200.10">
    <property type="entry name" value="Fumarase/aspartase (Central domain)"/>
    <property type="match status" value="1"/>
</dbReference>
<dbReference type="Gene3D" id="1.10.275.10">
    <property type="entry name" value="Fumarase/aspartase (N-terminal domain)"/>
    <property type="match status" value="1"/>
</dbReference>
<dbReference type="HAMAP" id="MF_00229">
    <property type="entry name" value="His_ammonia_lyase"/>
    <property type="match status" value="1"/>
</dbReference>
<dbReference type="InterPro" id="IPR001106">
    <property type="entry name" value="Aromatic_Lyase"/>
</dbReference>
<dbReference type="InterPro" id="IPR024083">
    <property type="entry name" value="Fumarase/histidase_N"/>
</dbReference>
<dbReference type="InterPro" id="IPR005921">
    <property type="entry name" value="HutH"/>
</dbReference>
<dbReference type="InterPro" id="IPR008948">
    <property type="entry name" value="L-Aspartase-like"/>
</dbReference>
<dbReference type="InterPro" id="IPR022313">
    <property type="entry name" value="Phe/His_NH3-lyase_AS"/>
</dbReference>
<dbReference type="NCBIfam" id="TIGR01225">
    <property type="entry name" value="hutH"/>
    <property type="match status" value="1"/>
</dbReference>
<dbReference type="NCBIfam" id="NF006871">
    <property type="entry name" value="PRK09367.1"/>
    <property type="match status" value="1"/>
</dbReference>
<dbReference type="PANTHER" id="PTHR10362">
    <property type="entry name" value="HISTIDINE AMMONIA-LYASE"/>
    <property type="match status" value="1"/>
</dbReference>
<dbReference type="Pfam" id="PF00221">
    <property type="entry name" value="Lyase_aromatic"/>
    <property type="match status" value="1"/>
</dbReference>
<dbReference type="SUPFAM" id="SSF48557">
    <property type="entry name" value="L-aspartase-like"/>
    <property type="match status" value="1"/>
</dbReference>
<dbReference type="PROSITE" id="PS00488">
    <property type="entry name" value="PAL_HISTIDASE"/>
    <property type="match status" value="1"/>
</dbReference>
<organism>
    <name type="scientific">Yersinia enterocolitica serotype O:8 / biotype 1B (strain NCTC 13174 / 8081)</name>
    <dbReference type="NCBI Taxonomy" id="393305"/>
    <lineage>
        <taxon>Bacteria</taxon>
        <taxon>Pseudomonadati</taxon>
        <taxon>Pseudomonadota</taxon>
        <taxon>Gammaproteobacteria</taxon>
        <taxon>Enterobacterales</taxon>
        <taxon>Yersiniaceae</taxon>
        <taxon>Yersinia</taxon>
    </lineage>
</organism>